<keyword id="KW-0067">ATP-binding</keyword>
<keyword id="KW-0143">Chaperone</keyword>
<keyword id="KW-0547">Nucleotide-binding</keyword>
<keyword id="KW-0597">Phosphoprotein</keyword>
<keyword id="KW-0346">Stress response</keyword>
<reference key="1">
    <citation type="journal article" date="2006" name="BMC Genomics">
        <title>Comparative genome analysis: selection pressure on the Borrelia vls cassettes is essential for infectivity.</title>
        <authorList>
            <person name="Gloeckner G."/>
            <person name="Schulte-Spechtel U."/>
            <person name="Schilhabel M."/>
            <person name="Felder M."/>
            <person name="Suehnel J."/>
            <person name="Wilske B."/>
            <person name="Platzer M."/>
        </authorList>
    </citation>
    <scope>NUCLEOTIDE SEQUENCE [LARGE SCALE GENOMIC DNA]</scope>
    <source>
        <strain>PKo</strain>
    </source>
</reference>
<reference key="2">
    <citation type="journal article" date="2011" name="J. Bacteriol.">
        <title>Whole-genome sequences of two Borrelia afzelii and two Borrelia garinii Lyme disease agent isolates.</title>
        <authorList>
            <person name="Casjens S.R."/>
            <person name="Mongodin E.F."/>
            <person name="Qiu W.G."/>
            <person name="Dunn J.J."/>
            <person name="Luft B.J."/>
            <person name="Fraser-Liggett C.M."/>
            <person name="Schutzer S.E."/>
        </authorList>
    </citation>
    <scope>NUCLEOTIDE SEQUENCE [LARGE SCALE GENOMIC DNA]</scope>
    <source>
        <strain>PKo</strain>
    </source>
</reference>
<protein>
    <recommendedName>
        <fullName evidence="1">Chaperone protein DnaK</fullName>
    </recommendedName>
    <alternativeName>
        <fullName evidence="1">HSP70</fullName>
    </alternativeName>
    <alternativeName>
        <fullName evidence="1">Heat shock 70 kDa protein</fullName>
    </alternativeName>
    <alternativeName>
        <fullName evidence="1">Heat shock protein 70</fullName>
    </alternativeName>
</protein>
<dbReference type="EMBL" id="CP000395">
    <property type="protein sequence ID" value="ABH01788.1"/>
    <property type="molecule type" value="Genomic_DNA"/>
</dbReference>
<dbReference type="EMBL" id="CP002933">
    <property type="protein sequence ID" value="AEL69741.1"/>
    <property type="molecule type" value="Genomic_DNA"/>
</dbReference>
<dbReference type="RefSeq" id="WP_004789842.1">
    <property type="nucleotide sequence ID" value="NZ_CP160066.1"/>
</dbReference>
<dbReference type="SMR" id="Q0SMZ0"/>
<dbReference type="STRING" id="29518.BLA32_01675"/>
<dbReference type="GeneID" id="77265364"/>
<dbReference type="KEGG" id="baf:BAPKO_0545"/>
<dbReference type="KEGG" id="bafz:BafPKo_0533"/>
<dbReference type="PATRIC" id="fig|390236.22.peg.514"/>
<dbReference type="eggNOG" id="COG0443">
    <property type="taxonomic scope" value="Bacteria"/>
</dbReference>
<dbReference type="HOGENOM" id="CLU_005965_2_4_12"/>
<dbReference type="OrthoDB" id="9766019at2"/>
<dbReference type="Proteomes" id="UP000005216">
    <property type="component" value="Chromosome"/>
</dbReference>
<dbReference type="GO" id="GO:0005524">
    <property type="term" value="F:ATP binding"/>
    <property type="evidence" value="ECO:0007669"/>
    <property type="project" value="UniProtKB-UniRule"/>
</dbReference>
<dbReference type="GO" id="GO:0140662">
    <property type="term" value="F:ATP-dependent protein folding chaperone"/>
    <property type="evidence" value="ECO:0007669"/>
    <property type="project" value="InterPro"/>
</dbReference>
<dbReference type="GO" id="GO:0051082">
    <property type="term" value="F:unfolded protein binding"/>
    <property type="evidence" value="ECO:0007669"/>
    <property type="project" value="InterPro"/>
</dbReference>
<dbReference type="CDD" id="cd10234">
    <property type="entry name" value="ASKHA_NBD_HSP70_DnaK-like"/>
    <property type="match status" value="1"/>
</dbReference>
<dbReference type="FunFam" id="2.60.34.10:FF:000014">
    <property type="entry name" value="Chaperone protein DnaK HSP70"/>
    <property type="match status" value="1"/>
</dbReference>
<dbReference type="FunFam" id="3.30.420.40:FF:000020">
    <property type="entry name" value="Chaperone protein HscA homolog"/>
    <property type="match status" value="1"/>
</dbReference>
<dbReference type="FunFam" id="1.20.1270.10:FF:000001">
    <property type="entry name" value="Molecular chaperone DnaK"/>
    <property type="match status" value="1"/>
</dbReference>
<dbReference type="FunFam" id="3.30.420.40:FF:000004">
    <property type="entry name" value="Molecular chaperone DnaK"/>
    <property type="match status" value="1"/>
</dbReference>
<dbReference type="FunFam" id="3.90.640.10:FF:000003">
    <property type="entry name" value="Molecular chaperone DnaK"/>
    <property type="match status" value="1"/>
</dbReference>
<dbReference type="Gene3D" id="1.20.1270.10">
    <property type="match status" value="1"/>
</dbReference>
<dbReference type="Gene3D" id="3.30.420.40">
    <property type="match status" value="2"/>
</dbReference>
<dbReference type="Gene3D" id="3.90.640.10">
    <property type="entry name" value="Actin, Chain A, domain 4"/>
    <property type="match status" value="1"/>
</dbReference>
<dbReference type="Gene3D" id="2.60.34.10">
    <property type="entry name" value="Substrate Binding Domain Of DNAk, Chain A, domain 1"/>
    <property type="match status" value="1"/>
</dbReference>
<dbReference type="HAMAP" id="MF_00332">
    <property type="entry name" value="DnaK"/>
    <property type="match status" value="1"/>
</dbReference>
<dbReference type="InterPro" id="IPR043129">
    <property type="entry name" value="ATPase_NBD"/>
</dbReference>
<dbReference type="InterPro" id="IPR012725">
    <property type="entry name" value="Chaperone_DnaK"/>
</dbReference>
<dbReference type="InterPro" id="IPR018181">
    <property type="entry name" value="Heat_shock_70_CS"/>
</dbReference>
<dbReference type="InterPro" id="IPR029048">
    <property type="entry name" value="HSP70_C_sf"/>
</dbReference>
<dbReference type="InterPro" id="IPR029047">
    <property type="entry name" value="HSP70_peptide-bd_sf"/>
</dbReference>
<dbReference type="InterPro" id="IPR013126">
    <property type="entry name" value="Hsp_70_fam"/>
</dbReference>
<dbReference type="NCBIfam" id="NF001413">
    <property type="entry name" value="PRK00290.1"/>
    <property type="match status" value="1"/>
</dbReference>
<dbReference type="NCBIfam" id="NF003520">
    <property type="entry name" value="PRK05183.1"/>
    <property type="match status" value="1"/>
</dbReference>
<dbReference type="NCBIfam" id="TIGR02350">
    <property type="entry name" value="prok_dnaK"/>
    <property type="match status" value="1"/>
</dbReference>
<dbReference type="PANTHER" id="PTHR19375">
    <property type="entry name" value="HEAT SHOCK PROTEIN 70KDA"/>
    <property type="match status" value="1"/>
</dbReference>
<dbReference type="Pfam" id="PF00012">
    <property type="entry name" value="HSP70"/>
    <property type="match status" value="1"/>
</dbReference>
<dbReference type="PRINTS" id="PR00301">
    <property type="entry name" value="HEATSHOCK70"/>
</dbReference>
<dbReference type="SUPFAM" id="SSF53067">
    <property type="entry name" value="Actin-like ATPase domain"/>
    <property type="match status" value="2"/>
</dbReference>
<dbReference type="SUPFAM" id="SSF100934">
    <property type="entry name" value="Heat shock protein 70kD (HSP70), C-terminal subdomain"/>
    <property type="match status" value="1"/>
</dbReference>
<dbReference type="SUPFAM" id="SSF100920">
    <property type="entry name" value="Heat shock protein 70kD (HSP70), peptide-binding domain"/>
    <property type="match status" value="1"/>
</dbReference>
<dbReference type="PROSITE" id="PS00297">
    <property type="entry name" value="HSP70_1"/>
    <property type="match status" value="1"/>
</dbReference>
<dbReference type="PROSITE" id="PS00329">
    <property type="entry name" value="HSP70_2"/>
    <property type="match status" value="1"/>
</dbReference>
<dbReference type="PROSITE" id="PS01036">
    <property type="entry name" value="HSP70_3"/>
    <property type="match status" value="1"/>
</dbReference>
<evidence type="ECO:0000255" key="1">
    <source>
        <dbReference type="HAMAP-Rule" id="MF_00332"/>
    </source>
</evidence>
<evidence type="ECO:0000256" key="2">
    <source>
        <dbReference type="SAM" id="MobiDB-lite"/>
    </source>
</evidence>
<proteinExistence type="inferred from homology"/>
<comment type="function">
    <text evidence="1">Acts as a chaperone.</text>
</comment>
<comment type="induction">
    <text evidence="1">By stress conditions e.g. heat shock.</text>
</comment>
<comment type="similarity">
    <text evidence="1">Belongs to the heat shock protein 70 family.</text>
</comment>
<sequence>MGKIIGIDLGTTNSCVAIMEHGKPVVIQNSEGGRTTPSIVAYTNKGERLVGQVAKNQMVTNPENTIYSIKRFMGRRFEEVASEIKMVPYKIEKGLNGDARVNISNIKKQMSPPEISAATLTKMKETAEAYLGEKVTEAVITVPAYFNDAQRQATKDAGKIAGLEVKRIVNEPTAAALAYGIEKKHEEIVAVYDLGGGTFDISILELGDGVFEVKSTNGDTHLGGDNFDDEIIKHLISEFKKESAIDLSNDKMALQRLKEAAEKAKIELSGAQEASINLPFITADANGPKHLQYTLTRAKFEQMVDHLVQKTKEPCLKAIKDAGLKASDINEVILVGGSTRIPAIQKIVKDIFGQDPNKGVNPDEAVAIGAAIQGGILTGETKDMVLLDVTPLSLGIETLGGVMTKLIERNTTIPTKKSQVFSTAADNQTSVDIKVLQGEREMAAQNRILGNFILDGIPAAPRGVPQIEVSFDIDANGIVHVSAKDMGTGKEQKIRIESSSGLSESEIDRMVKDAEAHAEEDKKLKENIEAKNTANSLIYQTEKSLKEYSEKISIEDKETIENKIKELKESLEKEDISLIKSKTEELQKASYKIAEMMYKDSSQQNASNQQENGTQNNTSEEGKEADYEVVDEDKK</sequence>
<accession>Q0SMZ0</accession>
<accession>G0IQ71</accession>
<gene>
    <name evidence="1" type="primary">dnaK</name>
    <name type="ordered locus">BAPKO_0545</name>
    <name type="ordered locus">BafPKo_0533</name>
</gene>
<feature type="chain" id="PRO_1000059516" description="Chaperone protein DnaK">
    <location>
        <begin position="1"/>
        <end position="635"/>
    </location>
</feature>
<feature type="region of interest" description="Disordered" evidence="2">
    <location>
        <begin position="599"/>
        <end position="635"/>
    </location>
</feature>
<feature type="compositionally biased region" description="Low complexity" evidence="2">
    <location>
        <begin position="601"/>
        <end position="612"/>
    </location>
</feature>
<feature type="compositionally biased region" description="Basic and acidic residues" evidence="2">
    <location>
        <begin position="620"/>
        <end position="635"/>
    </location>
</feature>
<feature type="modified residue" description="Phosphothreonine; by autocatalysis" evidence="1">
    <location>
        <position position="198"/>
    </location>
</feature>
<name>DNAK_BORAP</name>
<organism>
    <name type="scientific">Borreliella afzelii (strain PKo)</name>
    <name type="common">Borrelia afzelii</name>
    <dbReference type="NCBI Taxonomy" id="390236"/>
    <lineage>
        <taxon>Bacteria</taxon>
        <taxon>Pseudomonadati</taxon>
        <taxon>Spirochaetota</taxon>
        <taxon>Spirochaetia</taxon>
        <taxon>Spirochaetales</taxon>
        <taxon>Borreliaceae</taxon>
        <taxon>Borreliella</taxon>
    </lineage>
</organism>